<evidence type="ECO:0000255" key="1">
    <source>
        <dbReference type="HAMAP-Rule" id="MF_01077"/>
    </source>
</evidence>
<keyword id="KW-0963">Cytoplasm</keyword>
<keyword id="KW-1185">Reference proteome</keyword>
<keyword id="KW-0690">Ribosome biogenesis</keyword>
<protein>
    <recommendedName>
        <fullName evidence="1">Ribosome maturation factor RimP</fullName>
    </recommendedName>
</protein>
<organism>
    <name type="scientific">Nostoc sp. (strain PCC 7120 / SAG 25.82 / UTEX 2576)</name>
    <dbReference type="NCBI Taxonomy" id="103690"/>
    <lineage>
        <taxon>Bacteria</taxon>
        <taxon>Bacillati</taxon>
        <taxon>Cyanobacteriota</taxon>
        <taxon>Cyanophyceae</taxon>
        <taxon>Nostocales</taxon>
        <taxon>Nostocaceae</taxon>
        <taxon>Nostoc</taxon>
    </lineage>
</organism>
<feature type="chain" id="PRO_0000181838" description="Ribosome maturation factor RimP">
    <location>
        <begin position="1"/>
        <end position="153"/>
    </location>
</feature>
<sequence>MTHPLVPPITDLAIPVAEQLGLEVVGIVFHTNQRPPVLRIDIRNPQQDTGLDDCERMSRALEAALDATEIIPDAYVLEVSSPGISRQLVTDREFISFKGFPVIVSTSPPHEEQQEWIGQLIRRDETKVYINQKGRVIEIPRPLITRVLLYDGE</sequence>
<gene>
    <name evidence="1" type="primary">rimP</name>
    <name type="ordered locus">alr3828</name>
</gene>
<comment type="function">
    <text evidence="1">Required for maturation of 30S ribosomal subunits.</text>
</comment>
<comment type="subcellular location">
    <subcellularLocation>
        <location evidence="1">Cytoplasm</location>
    </subcellularLocation>
</comment>
<comment type="similarity">
    <text evidence="1">Belongs to the RimP family.</text>
</comment>
<accession>Q8YQJ5</accession>
<proteinExistence type="inferred from homology"/>
<reference key="1">
    <citation type="journal article" date="2001" name="DNA Res.">
        <title>Complete genomic sequence of the filamentous nitrogen-fixing cyanobacterium Anabaena sp. strain PCC 7120.</title>
        <authorList>
            <person name="Kaneko T."/>
            <person name="Nakamura Y."/>
            <person name="Wolk C.P."/>
            <person name="Kuritz T."/>
            <person name="Sasamoto S."/>
            <person name="Watanabe A."/>
            <person name="Iriguchi M."/>
            <person name="Ishikawa A."/>
            <person name="Kawashima K."/>
            <person name="Kimura T."/>
            <person name="Kishida Y."/>
            <person name="Kohara M."/>
            <person name="Matsumoto M."/>
            <person name="Matsuno A."/>
            <person name="Muraki A."/>
            <person name="Nakazaki N."/>
            <person name="Shimpo S."/>
            <person name="Sugimoto M."/>
            <person name="Takazawa M."/>
            <person name="Yamada M."/>
            <person name="Yasuda M."/>
            <person name="Tabata S."/>
        </authorList>
    </citation>
    <scope>NUCLEOTIDE SEQUENCE [LARGE SCALE GENOMIC DNA]</scope>
    <source>
        <strain>PCC 7120 / SAG 25.82 / UTEX 2576</strain>
    </source>
</reference>
<dbReference type="EMBL" id="BA000019">
    <property type="protein sequence ID" value="BAB75527.1"/>
    <property type="molecule type" value="Genomic_DNA"/>
</dbReference>
<dbReference type="PIR" id="AE2284">
    <property type="entry name" value="AE2284"/>
</dbReference>
<dbReference type="RefSeq" id="WP_010997969.1">
    <property type="nucleotide sequence ID" value="NZ_RSCN01000011.1"/>
</dbReference>
<dbReference type="SMR" id="Q8YQJ5"/>
<dbReference type="STRING" id="103690.gene:10495870"/>
<dbReference type="KEGG" id="ana:alr3828"/>
<dbReference type="eggNOG" id="COG0779">
    <property type="taxonomic scope" value="Bacteria"/>
</dbReference>
<dbReference type="OrthoDB" id="9805006at2"/>
<dbReference type="Proteomes" id="UP000002483">
    <property type="component" value="Chromosome"/>
</dbReference>
<dbReference type="GO" id="GO:0005829">
    <property type="term" value="C:cytosol"/>
    <property type="evidence" value="ECO:0007669"/>
    <property type="project" value="TreeGrafter"/>
</dbReference>
<dbReference type="GO" id="GO:0000028">
    <property type="term" value="P:ribosomal small subunit assembly"/>
    <property type="evidence" value="ECO:0007669"/>
    <property type="project" value="TreeGrafter"/>
</dbReference>
<dbReference type="GO" id="GO:0006412">
    <property type="term" value="P:translation"/>
    <property type="evidence" value="ECO:0007669"/>
    <property type="project" value="TreeGrafter"/>
</dbReference>
<dbReference type="FunFam" id="3.30.300.70:FF:000001">
    <property type="entry name" value="Ribosome maturation factor RimP"/>
    <property type="match status" value="1"/>
</dbReference>
<dbReference type="Gene3D" id="3.30.300.70">
    <property type="entry name" value="RimP-like superfamily, N-terminal"/>
    <property type="match status" value="1"/>
</dbReference>
<dbReference type="HAMAP" id="MF_01077">
    <property type="entry name" value="RimP"/>
    <property type="match status" value="1"/>
</dbReference>
<dbReference type="InterPro" id="IPR003728">
    <property type="entry name" value="Ribosome_maturation_RimP"/>
</dbReference>
<dbReference type="InterPro" id="IPR036847">
    <property type="entry name" value="RimP_C_sf"/>
</dbReference>
<dbReference type="InterPro" id="IPR028989">
    <property type="entry name" value="RimP_N"/>
</dbReference>
<dbReference type="InterPro" id="IPR035956">
    <property type="entry name" value="RimP_N_sf"/>
</dbReference>
<dbReference type="NCBIfam" id="NF000935">
    <property type="entry name" value="PRK00092.3-3"/>
    <property type="match status" value="1"/>
</dbReference>
<dbReference type="PANTHER" id="PTHR33867">
    <property type="entry name" value="RIBOSOME MATURATION FACTOR RIMP"/>
    <property type="match status" value="1"/>
</dbReference>
<dbReference type="PANTHER" id="PTHR33867:SF1">
    <property type="entry name" value="RIBOSOME MATURATION FACTOR RIMP"/>
    <property type="match status" value="1"/>
</dbReference>
<dbReference type="Pfam" id="PF02576">
    <property type="entry name" value="RimP_N"/>
    <property type="match status" value="1"/>
</dbReference>
<dbReference type="SUPFAM" id="SSF74942">
    <property type="entry name" value="YhbC-like, C-terminal domain"/>
    <property type="match status" value="1"/>
</dbReference>
<dbReference type="SUPFAM" id="SSF75420">
    <property type="entry name" value="YhbC-like, N-terminal domain"/>
    <property type="match status" value="1"/>
</dbReference>
<name>RIMP_NOSS1</name>